<comment type="function">
    <text evidence="1">Mitochondrial intermembrane chaperone that participates in the import and insertion of multi-pass transmembrane proteins into the mitochondrial inner membrane. May also be required for the transfer of beta-barrel precursors from the TOM complex to the sorting and assembly machinery (SAM complex) of the outer membrane. Acts as a chaperone-like protein that protects the hydrophobic precursors from aggregation and guide them through the mitochondrial intermembrane space (By similarity).</text>
</comment>
<comment type="subunit">
    <text evidence="1">Heterohexamer; composed of 3 copies of TIMM9 and 3 copies of TIMM10/TIM10A, named soluble 70 kDa complex. The complex forms a 6-bladed alpha-propeller structure and associates with the TIMM22 component of the TIM22 complex. Interacts with multi-pass transmembrane proteins in transit (By similarity).</text>
</comment>
<comment type="subcellular location">
    <subcellularLocation>
        <location evidence="1">Mitochondrion inner membrane</location>
        <topology evidence="1">Peripheral membrane protein</topology>
        <orientation evidence="1">Intermembrane side</orientation>
    </subcellularLocation>
</comment>
<comment type="domain">
    <text evidence="1">The twin CX3C motif contains 4 conserved Cys residues that form 2 disulfide bonds in the mitochondrial intermembrane space. However, during the transit of TIMM10 from cytoplasm into mitochondrion, the Cys residues probably coordinate zinc, thereby preventing folding and allowing its transfer across mitochondrial outer membrane (By similarity).</text>
</comment>
<comment type="similarity">
    <text evidence="2">Belongs to the small Tim family.</text>
</comment>
<protein>
    <recommendedName>
        <fullName>Mitochondrial import inner membrane translocase subunit Tim10-A</fullName>
    </recommendedName>
</protein>
<feature type="chain" id="PRO_0000228055" description="Mitochondrial import inner membrane translocase subunit Tim10-A">
    <location>
        <begin position="1"/>
        <end position="93"/>
    </location>
</feature>
<feature type="short sequence motif" description="Twin CX3C motif">
    <location>
        <begin position="32"/>
        <end position="57"/>
    </location>
</feature>
<feature type="disulfide bond" evidence="1">
    <location>
        <begin position="32"/>
        <end position="57"/>
    </location>
</feature>
<feature type="disulfide bond" evidence="1">
    <location>
        <begin position="36"/>
        <end position="53"/>
    </location>
</feature>
<proteinExistence type="inferred from homology"/>
<name>TI10A_XENLA</name>
<keyword id="KW-0143">Chaperone</keyword>
<keyword id="KW-1015">Disulfide bond</keyword>
<keyword id="KW-0472">Membrane</keyword>
<keyword id="KW-0479">Metal-binding</keyword>
<keyword id="KW-0496">Mitochondrion</keyword>
<keyword id="KW-0999">Mitochondrion inner membrane</keyword>
<keyword id="KW-0653">Protein transport</keyword>
<keyword id="KW-1185">Reference proteome</keyword>
<keyword id="KW-0811">Translocation</keyword>
<keyword id="KW-0813">Transport</keyword>
<keyword id="KW-0862">Zinc</keyword>
<gene>
    <name type="primary">timm10-a</name>
    <name type="synonym">tim10-a</name>
</gene>
<accession>Q4QR62</accession>
<dbReference type="EMBL" id="BC097518">
    <property type="protein sequence ID" value="AAH97518.1"/>
    <property type="molecule type" value="mRNA"/>
</dbReference>
<dbReference type="RefSeq" id="NP_001089442.1">
    <property type="nucleotide sequence ID" value="NM_001095973.1"/>
</dbReference>
<dbReference type="SMR" id="Q4QR62"/>
<dbReference type="DNASU" id="734492"/>
<dbReference type="GeneID" id="734492"/>
<dbReference type="KEGG" id="xla:734492"/>
<dbReference type="AGR" id="Xenbase:XB-GENE-6256179"/>
<dbReference type="CTD" id="734492"/>
<dbReference type="Xenbase" id="XB-GENE-6256179">
    <property type="gene designation" value="timm10.S"/>
</dbReference>
<dbReference type="OrthoDB" id="274922at2759"/>
<dbReference type="Proteomes" id="UP000186698">
    <property type="component" value="Chromosome 1S"/>
</dbReference>
<dbReference type="Bgee" id="734492">
    <property type="expression patterns" value="Expressed in neurula embryo and 19 other cell types or tissues"/>
</dbReference>
<dbReference type="GO" id="GO:0005743">
    <property type="term" value="C:mitochondrial inner membrane"/>
    <property type="evidence" value="ECO:0007669"/>
    <property type="project" value="UniProtKB-SubCell"/>
</dbReference>
<dbReference type="GO" id="GO:0046872">
    <property type="term" value="F:metal ion binding"/>
    <property type="evidence" value="ECO:0007669"/>
    <property type="project" value="UniProtKB-KW"/>
</dbReference>
<dbReference type="GO" id="GO:0045039">
    <property type="term" value="P:protein insertion into mitochondrial inner membrane"/>
    <property type="evidence" value="ECO:0007669"/>
    <property type="project" value="UniProtKB-ARBA"/>
</dbReference>
<dbReference type="FunFam" id="1.10.287.810:FF:000002">
    <property type="entry name" value="Mitochondrial import inner membrane translocase subunit tim10"/>
    <property type="match status" value="1"/>
</dbReference>
<dbReference type="Gene3D" id="1.10.287.810">
    <property type="entry name" value="Mitochondrial import inner membrane translocase subunit tim13 like domains"/>
    <property type="match status" value="1"/>
</dbReference>
<dbReference type="InterPro" id="IPR004217">
    <property type="entry name" value="Tim10-like"/>
</dbReference>
<dbReference type="InterPro" id="IPR035427">
    <property type="entry name" value="Tim10-like_dom_sf"/>
</dbReference>
<dbReference type="PANTHER" id="PTHR11038">
    <property type="entry name" value="MITOCHONDRIAL IMPORT INNER MEMBRANE TRANSLOCASE SUBUNIT TIM10"/>
    <property type="match status" value="1"/>
</dbReference>
<dbReference type="PANTHER" id="PTHR11038:SF16">
    <property type="entry name" value="MITOCHONDRIAL IMPORT INNER MEMBRANE TRANSLOCASE SUBUNIT TIM10"/>
    <property type="match status" value="1"/>
</dbReference>
<dbReference type="Pfam" id="PF02953">
    <property type="entry name" value="zf-Tim10_DDP"/>
    <property type="match status" value="1"/>
</dbReference>
<dbReference type="SUPFAM" id="SSF144122">
    <property type="entry name" value="Tim10-like"/>
    <property type="match status" value="1"/>
</dbReference>
<reference key="1">
    <citation type="submission" date="2005-06" db="EMBL/GenBank/DDBJ databases">
        <authorList>
            <consortium name="NIH - Xenopus Gene Collection (XGC) project"/>
        </authorList>
    </citation>
    <scope>NUCLEOTIDE SEQUENCE [LARGE SCALE MRNA]</scope>
    <source>
        <tissue>Ovary</tissue>
    </source>
</reference>
<organism>
    <name type="scientific">Xenopus laevis</name>
    <name type="common">African clawed frog</name>
    <dbReference type="NCBI Taxonomy" id="8355"/>
    <lineage>
        <taxon>Eukaryota</taxon>
        <taxon>Metazoa</taxon>
        <taxon>Chordata</taxon>
        <taxon>Craniata</taxon>
        <taxon>Vertebrata</taxon>
        <taxon>Euteleostomi</taxon>
        <taxon>Amphibia</taxon>
        <taxon>Batrachia</taxon>
        <taxon>Anura</taxon>
        <taxon>Pipoidea</taxon>
        <taxon>Pipidae</taxon>
        <taxon>Xenopodinae</taxon>
        <taxon>Xenopus</taxon>
        <taxon>Xenopus</taxon>
    </lineage>
</organism>
<sequence>MDPVKAQQLAAELEVEMMADMYNSLLRMTGACHKKCVPPHYKEAELSKGESVCLDRCVSKYLDIHERMGKKLTELSLQDEELMKKMQQGVTST</sequence>
<evidence type="ECO:0000250" key="1"/>
<evidence type="ECO:0000305" key="2"/>